<accession>B7MYX8</accession>
<feature type="chain" id="PRO_1000191757" description="Protein NrdI">
    <location>
        <begin position="1"/>
        <end position="136"/>
    </location>
</feature>
<name>NRDI_ECO81</name>
<comment type="function">
    <text evidence="1">Probably involved in ribonucleotide reductase function.</text>
</comment>
<comment type="similarity">
    <text evidence="1">Belongs to the NrdI family.</text>
</comment>
<protein>
    <recommendedName>
        <fullName evidence="1">Protein NrdI</fullName>
    </recommendedName>
</protein>
<proteinExistence type="inferred from homology"/>
<reference key="1">
    <citation type="journal article" date="2009" name="PLoS Genet.">
        <title>Organised genome dynamics in the Escherichia coli species results in highly diverse adaptive paths.</title>
        <authorList>
            <person name="Touchon M."/>
            <person name="Hoede C."/>
            <person name="Tenaillon O."/>
            <person name="Barbe V."/>
            <person name="Baeriswyl S."/>
            <person name="Bidet P."/>
            <person name="Bingen E."/>
            <person name="Bonacorsi S."/>
            <person name="Bouchier C."/>
            <person name="Bouvet O."/>
            <person name="Calteau A."/>
            <person name="Chiapello H."/>
            <person name="Clermont O."/>
            <person name="Cruveiller S."/>
            <person name="Danchin A."/>
            <person name="Diard M."/>
            <person name="Dossat C."/>
            <person name="Karoui M.E."/>
            <person name="Frapy E."/>
            <person name="Garry L."/>
            <person name="Ghigo J.M."/>
            <person name="Gilles A.M."/>
            <person name="Johnson J."/>
            <person name="Le Bouguenec C."/>
            <person name="Lescat M."/>
            <person name="Mangenot S."/>
            <person name="Martinez-Jehanne V."/>
            <person name="Matic I."/>
            <person name="Nassif X."/>
            <person name="Oztas S."/>
            <person name="Petit M.A."/>
            <person name="Pichon C."/>
            <person name="Rouy Z."/>
            <person name="Ruf C.S."/>
            <person name="Schneider D."/>
            <person name="Tourret J."/>
            <person name="Vacherie B."/>
            <person name="Vallenet D."/>
            <person name="Medigue C."/>
            <person name="Rocha E.P.C."/>
            <person name="Denamur E."/>
        </authorList>
    </citation>
    <scope>NUCLEOTIDE SEQUENCE [LARGE SCALE GENOMIC DNA]</scope>
    <source>
        <strain>ED1a</strain>
    </source>
</reference>
<organism>
    <name type="scientific">Escherichia coli O81 (strain ED1a)</name>
    <dbReference type="NCBI Taxonomy" id="585397"/>
    <lineage>
        <taxon>Bacteria</taxon>
        <taxon>Pseudomonadati</taxon>
        <taxon>Pseudomonadota</taxon>
        <taxon>Gammaproteobacteria</taxon>
        <taxon>Enterobacterales</taxon>
        <taxon>Enterobacteriaceae</taxon>
        <taxon>Escherichia</taxon>
    </lineage>
</organism>
<gene>
    <name evidence="1" type="primary">nrdI</name>
    <name type="ordered locus">ECED1_3129</name>
</gene>
<sequence>MSQLVYFSSSSENTQRFIERLGLPAVRIPLNERERIQVDEPYILIVPSYGGGGTAGAVPRQVIRFLNDEHNRALLRGVIASGNRNFGEAYGRAGDVIARKCGVPWLYRFELMGTQSDIENVRKGVTEFWQRQPQNA</sequence>
<evidence type="ECO:0000255" key="1">
    <source>
        <dbReference type="HAMAP-Rule" id="MF_00128"/>
    </source>
</evidence>
<dbReference type="EMBL" id="CU928162">
    <property type="protein sequence ID" value="CAR09295.2"/>
    <property type="molecule type" value="Genomic_DNA"/>
</dbReference>
<dbReference type="RefSeq" id="WP_000080947.1">
    <property type="nucleotide sequence ID" value="NC_011745.1"/>
</dbReference>
<dbReference type="SMR" id="B7MYX8"/>
<dbReference type="GeneID" id="75172757"/>
<dbReference type="KEGG" id="ecq:ECED1_3129"/>
<dbReference type="HOGENOM" id="CLU_114845_0_0_6"/>
<dbReference type="Proteomes" id="UP000000748">
    <property type="component" value="Chromosome"/>
</dbReference>
<dbReference type="GO" id="GO:0010181">
    <property type="term" value="F:FMN binding"/>
    <property type="evidence" value="ECO:0007669"/>
    <property type="project" value="InterPro"/>
</dbReference>
<dbReference type="GO" id="GO:0036211">
    <property type="term" value="P:protein modification process"/>
    <property type="evidence" value="ECO:0007669"/>
    <property type="project" value="InterPro"/>
</dbReference>
<dbReference type="FunFam" id="3.40.50.360:FF:000005">
    <property type="entry name" value="Protein NrdI"/>
    <property type="match status" value="1"/>
</dbReference>
<dbReference type="Gene3D" id="3.40.50.360">
    <property type="match status" value="1"/>
</dbReference>
<dbReference type="HAMAP" id="MF_00128">
    <property type="entry name" value="NrdI"/>
    <property type="match status" value="1"/>
</dbReference>
<dbReference type="InterPro" id="IPR029039">
    <property type="entry name" value="Flavoprotein-like_sf"/>
</dbReference>
<dbReference type="InterPro" id="IPR020852">
    <property type="entry name" value="RNR_Ib_NrdI_bac"/>
</dbReference>
<dbReference type="InterPro" id="IPR004465">
    <property type="entry name" value="RNR_NrdI"/>
</dbReference>
<dbReference type="NCBIfam" id="TIGR00333">
    <property type="entry name" value="nrdI"/>
    <property type="match status" value="1"/>
</dbReference>
<dbReference type="PANTHER" id="PTHR37297">
    <property type="entry name" value="PROTEIN NRDI"/>
    <property type="match status" value="1"/>
</dbReference>
<dbReference type="PANTHER" id="PTHR37297:SF1">
    <property type="entry name" value="PROTEIN NRDI"/>
    <property type="match status" value="1"/>
</dbReference>
<dbReference type="Pfam" id="PF07972">
    <property type="entry name" value="Flavodoxin_NdrI"/>
    <property type="match status" value="1"/>
</dbReference>
<dbReference type="PIRSF" id="PIRSF005087">
    <property type="entry name" value="NrdI"/>
    <property type="match status" value="1"/>
</dbReference>
<dbReference type="SUPFAM" id="SSF52218">
    <property type="entry name" value="Flavoproteins"/>
    <property type="match status" value="1"/>
</dbReference>